<feature type="initiator methionine" description="Removed" evidence="7">
    <location>
        <position position="1"/>
    </location>
</feature>
<feature type="chain" id="PRO_0000056667" description="Neurofibromin">
    <location>
        <begin position="2"/>
        <end position="2820"/>
    </location>
</feature>
<feature type="domain" description="Ras-GAP" evidence="5">
    <location>
        <begin position="1253"/>
        <end position="1463"/>
    </location>
</feature>
<feature type="domain" description="CRAL-TRIO" evidence="4">
    <location>
        <begin position="1561"/>
        <end position="1719"/>
    </location>
</feature>
<feature type="region of interest" description="Lipid binding" evidence="1">
    <location>
        <begin position="1561"/>
        <end position="1818"/>
    </location>
</feature>
<feature type="region of interest" description="Disordered" evidence="6">
    <location>
        <begin position="2457"/>
        <end position="2482"/>
    </location>
</feature>
<feature type="region of interest" description="Disordered" evidence="6">
    <location>
        <begin position="2768"/>
        <end position="2820"/>
    </location>
</feature>
<feature type="short sequence motif" description="Bipartite nuclear localization signal" evidence="1">
    <location>
        <begin position="2536"/>
        <end position="2552"/>
    </location>
</feature>
<feature type="compositionally biased region" description="Basic and acidic residues" evidence="6">
    <location>
        <begin position="2458"/>
        <end position="2470"/>
    </location>
</feature>
<feature type="compositionally biased region" description="Polar residues" evidence="6">
    <location>
        <begin position="2782"/>
        <end position="2808"/>
    </location>
</feature>
<feature type="site" description="Arginine finger; crucial for GTP hydrolysis by stabilizing the transition state" evidence="5">
    <location>
        <position position="1278"/>
    </location>
</feature>
<feature type="modified residue" description="N-acetylalanine" evidence="7">
    <location>
        <position position="2"/>
    </location>
</feature>
<feature type="modified residue" description="Phosphoserine" evidence="8">
    <location>
        <position position="866"/>
    </location>
</feature>
<feature type="modified residue" description="Phosphoserine" evidence="2">
    <location>
        <position position="878"/>
    </location>
</feature>
<feature type="modified residue" description="Phosphoserine" evidence="8">
    <location>
        <position position="2169"/>
    </location>
</feature>
<feature type="modified residue" description="Phosphoserine" evidence="3">
    <location>
        <position position="2448"/>
    </location>
</feature>
<feature type="modified residue" description="Phosphothreonine" evidence="3">
    <location>
        <position position="2495"/>
    </location>
</feature>
<feature type="modified residue" description="Phosphoserine" evidence="2">
    <location>
        <position position="2496"/>
    </location>
</feature>
<feature type="modified residue" description="Phosphoserine" evidence="2">
    <location>
        <position position="2502"/>
    </location>
</feature>
<feature type="modified residue" description="Phosphoserine" evidence="8">
    <location>
        <position position="2504"/>
    </location>
</feature>
<feature type="modified residue" description="Phosphoserine" evidence="8">
    <location>
        <position position="2524"/>
    </location>
</feature>
<feature type="modified residue" description="Phosphothreonine" evidence="2">
    <location>
        <position position="2546"/>
    </location>
</feature>
<feature type="modified residue" description="Phosphoserine" evidence="2">
    <location>
        <position position="2578"/>
    </location>
</feature>
<feature type="modified residue" description="Phosphoserine" evidence="2">
    <location>
        <position position="2783"/>
    </location>
</feature>
<feature type="modified residue" description="Phosphoserine" evidence="2">
    <location>
        <position position="2798"/>
    </location>
</feature>
<comment type="function">
    <text evidence="2">Stimulates the GTPase activity of Ras. NF1 shows greater affinity for Ras GAP, but lower specific activity. May be a regulator of Ras activity.</text>
</comment>
<comment type="subunit">
    <text evidence="2">Interacts with HTR6. Interacts with SPRED2.</text>
</comment>
<comment type="subcellular location">
    <subcellularLocation>
        <location evidence="2">Nucleus</location>
    </subcellularLocation>
    <subcellularLocation>
        <location evidence="2">Nucleus</location>
        <location evidence="2">Nucleolus</location>
    </subcellularLocation>
    <subcellularLocation>
        <location evidence="2">Cell membrane</location>
    </subcellularLocation>
</comment>
<comment type="domain">
    <text evidence="2">Binds phospholipids via its C-terminal CRAL-TRIO domain. Binds primarily glycerophospholipids with monounsaturated C18:1 and/or C16:1 fatty acid moieties and a phosphatidylethanolamine or phosphatidylcholine headgroup. Has lesser affinity for lipids containing phosphatidylserine and phosphatidylinositol.</text>
</comment>
<comment type="PTM">
    <text evidence="3">Ubiquitinated by RNF7/RBX2, leading to its degradation.</text>
</comment>
<evidence type="ECO:0000250" key="1"/>
<evidence type="ECO:0000250" key="2">
    <source>
        <dbReference type="UniProtKB" id="P21359"/>
    </source>
</evidence>
<evidence type="ECO:0000250" key="3">
    <source>
        <dbReference type="UniProtKB" id="Q04690"/>
    </source>
</evidence>
<evidence type="ECO:0000255" key="4">
    <source>
        <dbReference type="PROSITE-ProRule" id="PRU00056"/>
    </source>
</evidence>
<evidence type="ECO:0000255" key="5">
    <source>
        <dbReference type="PROSITE-ProRule" id="PRU00167"/>
    </source>
</evidence>
<evidence type="ECO:0000256" key="6">
    <source>
        <dbReference type="SAM" id="MobiDB-lite"/>
    </source>
</evidence>
<evidence type="ECO:0000269" key="7">
    <source ref="3"/>
</evidence>
<evidence type="ECO:0007744" key="8">
    <source>
    </source>
</evidence>
<dbReference type="EMBL" id="D45201">
    <property type="protein sequence ID" value="BAA08141.1"/>
    <property type="molecule type" value="mRNA"/>
</dbReference>
<dbReference type="PIR" id="JC5196">
    <property type="entry name" value="JC5196"/>
</dbReference>
<dbReference type="RefSeq" id="NP_036741.1">
    <property type="nucleotide sequence ID" value="NM_012609.1"/>
</dbReference>
<dbReference type="SMR" id="P97526"/>
<dbReference type="BioGRID" id="246735">
    <property type="interactions" value="7"/>
</dbReference>
<dbReference type="FunCoup" id="P97526">
    <property type="interactions" value="3879"/>
</dbReference>
<dbReference type="IntAct" id="P97526">
    <property type="interactions" value="4"/>
</dbReference>
<dbReference type="MINT" id="P97526"/>
<dbReference type="STRING" id="10116.ENSRNOP00000050393"/>
<dbReference type="CarbonylDB" id="P97526"/>
<dbReference type="GlyGen" id="P97526">
    <property type="glycosylation" value="1 site"/>
</dbReference>
<dbReference type="iPTMnet" id="P97526"/>
<dbReference type="PhosphoSitePlus" id="P97526"/>
<dbReference type="PaxDb" id="10116-ENSRNOP00000050393"/>
<dbReference type="GeneID" id="24592"/>
<dbReference type="KEGG" id="rno:24592"/>
<dbReference type="AGR" id="RGD:3168"/>
<dbReference type="CTD" id="4763"/>
<dbReference type="RGD" id="3168">
    <property type="gene designation" value="Nf1"/>
</dbReference>
<dbReference type="eggNOG" id="KOG1826">
    <property type="taxonomic scope" value="Eukaryota"/>
</dbReference>
<dbReference type="InParanoid" id="P97526"/>
<dbReference type="OrthoDB" id="28245at2759"/>
<dbReference type="PhylomeDB" id="P97526"/>
<dbReference type="Reactome" id="R-RNO-5658442">
    <property type="pathway name" value="Regulation of RAS by GAPs"/>
</dbReference>
<dbReference type="ChiTaRS" id="Nf1">
    <property type="organism name" value="rat"/>
</dbReference>
<dbReference type="PRO" id="PR:P97526"/>
<dbReference type="Proteomes" id="UP000002494">
    <property type="component" value="Unplaced"/>
</dbReference>
<dbReference type="GO" id="GO:0030424">
    <property type="term" value="C:axon"/>
    <property type="evidence" value="ECO:0000314"/>
    <property type="project" value="HGNC-UCL"/>
</dbReference>
<dbReference type="GO" id="GO:0005737">
    <property type="term" value="C:cytoplasm"/>
    <property type="evidence" value="ECO:0000314"/>
    <property type="project" value="HGNC-UCL"/>
</dbReference>
<dbReference type="GO" id="GO:0030425">
    <property type="term" value="C:dendrite"/>
    <property type="evidence" value="ECO:0000314"/>
    <property type="project" value="HGNC-UCL"/>
</dbReference>
<dbReference type="GO" id="GO:0098978">
    <property type="term" value="C:glutamatergic synapse"/>
    <property type="evidence" value="ECO:0000314"/>
    <property type="project" value="SynGO"/>
</dbReference>
<dbReference type="GO" id="GO:0005730">
    <property type="term" value="C:nucleolus"/>
    <property type="evidence" value="ECO:0007669"/>
    <property type="project" value="UniProtKB-SubCell"/>
</dbReference>
<dbReference type="GO" id="GO:0005634">
    <property type="term" value="C:nucleus"/>
    <property type="evidence" value="ECO:0000314"/>
    <property type="project" value="HGNC-UCL"/>
</dbReference>
<dbReference type="GO" id="GO:0005886">
    <property type="term" value="C:plasma membrane"/>
    <property type="evidence" value="ECO:0007669"/>
    <property type="project" value="UniProtKB-SubCell"/>
</dbReference>
<dbReference type="GO" id="GO:0098793">
    <property type="term" value="C:presynapse"/>
    <property type="evidence" value="ECO:0007669"/>
    <property type="project" value="GOC"/>
</dbReference>
<dbReference type="GO" id="GO:0032991">
    <property type="term" value="C:protein-containing complex"/>
    <property type="evidence" value="ECO:0000314"/>
    <property type="project" value="RGD"/>
</dbReference>
<dbReference type="GO" id="GO:0005096">
    <property type="term" value="F:GTPase activator activity"/>
    <property type="evidence" value="ECO:0000315"/>
    <property type="project" value="HGNC-UCL"/>
</dbReference>
<dbReference type="GO" id="GO:0008017">
    <property type="term" value="F:microtubule binding"/>
    <property type="evidence" value="ECO:0000314"/>
    <property type="project" value="MGI"/>
</dbReference>
<dbReference type="GO" id="GO:0031210">
    <property type="term" value="F:phosphatidylcholine binding"/>
    <property type="evidence" value="ECO:0000250"/>
    <property type="project" value="UniProtKB"/>
</dbReference>
<dbReference type="GO" id="GO:0008429">
    <property type="term" value="F:phosphatidylethanolamine binding"/>
    <property type="evidence" value="ECO:0000250"/>
    <property type="project" value="UniProtKB"/>
</dbReference>
<dbReference type="GO" id="GO:0045545">
    <property type="term" value="F:syndecan binding"/>
    <property type="evidence" value="ECO:0000353"/>
    <property type="project" value="RGD"/>
</dbReference>
<dbReference type="GO" id="GO:0030036">
    <property type="term" value="P:actin cytoskeleton organization"/>
    <property type="evidence" value="ECO:0000250"/>
    <property type="project" value="HGNC-UCL"/>
</dbReference>
<dbReference type="GO" id="GO:0030325">
    <property type="term" value="P:adrenal gland development"/>
    <property type="evidence" value="ECO:0000250"/>
    <property type="project" value="HGNC-UCL"/>
</dbReference>
<dbReference type="GO" id="GO:0021764">
    <property type="term" value="P:amygdala development"/>
    <property type="evidence" value="ECO:0000266"/>
    <property type="project" value="RGD"/>
</dbReference>
<dbReference type="GO" id="GO:0001525">
    <property type="term" value="P:angiogenesis"/>
    <property type="evidence" value="ECO:0000266"/>
    <property type="project" value="RGD"/>
</dbReference>
<dbReference type="GO" id="GO:0006915">
    <property type="term" value="P:apoptotic process"/>
    <property type="evidence" value="ECO:0000266"/>
    <property type="project" value="RGD"/>
</dbReference>
<dbReference type="GO" id="GO:0048844">
    <property type="term" value="P:artery morphogenesis"/>
    <property type="evidence" value="ECO:0000250"/>
    <property type="project" value="HGNC-UCL"/>
</dbReference>
<dbReference type="GO" id="GO:0048708">
    <property type="term" value="P:astrocyte differentiation"/>
    <property type="evidence" value="ECO:0000266"/>
    <property type="project" value="RGD"/>
</dbReference>
<dbReference type="GO" id="GO:0007420">
    <property type="term" value="P:brain development"/>
    <property type="evidence" value="ECO:0000250"/>
    <property type="project" value="HGNC-UCL"/>
</dbReference>
<dbReference type="GO" id="GO:0048593">
    <property type="term" value="P:camera-type eye morphogenesis"/>
    <property type="evidence" value="ECO:0000250"/>
    <property type="project" value="HGNC-UCL"/>
</dbReference>
<dbReference type="GO" id="GO:0007154">
    <property type="term" value="P:cell communication"/>
    <property type="evidence" value="ECO:0000250"/>
    <property type="project" value="HGNC-UCL"/>
</dbReference>
<dbReference type="GO" id="GO:0016477">
    <property type="term" value="P:cell migration"/>
    <property type="evidence" value="ECO:0000266"/>
    <property type="project" value="RGD"/>
</dbReference>
<dbReference type="GO" id="GO:0008283">
    <property type="term" value="P:cell population proliferation"/>
    <property type="evidence" value="ECO:0000266"/>
    <property type="project" value="RGD"/>
</dbReference>
<dbReference type="GO" id="GO:0071549">
    <property type="term" value="P:cellular response to dexamethasone stimulus"/>
    <property type="evidence" value="ECO:0000270"/>
    <property type="project" value="RGD"/>
</dbReference>
<dbReference type="GO" id="GO:0034605">
    <property type="term" value="P:cellular response to heat"/>
    <property type="evidence" value="ECO:0000266"/>
    <property type="project" value="RGD"/>
</dbReference>
<dbReference type="GO" id="GO:1990090">
    <property type="term" value="P:cellular response to nerve growth factor stimulus"/>
    <property type="evidence" value="ECO:0000270"/>
    <property type="project" value="RGD"/>
</dbReference>
<dbReference type="GO" id="GO:0021987">
    <property type="term" value="P:cerebral cortex development"/>
    <property type="evidence" value="ECO:0000250"/>
    <property type="project" value="HGNC-UCL"/>
</dbReference>
<dbReference type="GO" id="GO:0050890">
    <property type="term" value="P:cognition"/>
    <property type="evidence" value="ECO:0000266"/>
    <property type="project" value="RGD"/>
</dbReference>
<dbReference type="GO" id="GO:0030199">
    <property type="term" value="P:collagen fibril organization"/>
    <property type="evidence" value="ECO:0000250"/>
    <property type="project" value="HGNC-UCL"/>
</dbReference>
<dbReference type="GO" id="GO:0001935">
    <property type="term" value="P:endothelial cell proliferation"/>
    <property type="evidence" value="ECO:0000266"/>
    <property type="project" value="RGD"/>
</dbReference>
<dbReference type="GO" id="GO:0030198">
    <property type="term" value="P:extracellular matrix organization"/>
    <property type="evidence" value="ECO:0000250"/>
    <property type="project" value="HGNC-UCL"/>
</dbReference>
<dbReference type="GO" id="GO:0097192">
    <property type="term" value="P:extrinsic apoptotic signaling pathway in absence of ligand"/>
    <property type="evidence" value="ECO:0000266"/>
    <property type="project" value="RGD"/>
</dbReference>
<dbReference type="GO" id="GO:0008625">
    <property type="term" value="P:extrinsic apoptotic signaling pathway via death domain receptors"/>
    <property type="evidence" value="ECO:0000266"/>
    <property type="project" value="RGD"/>
</dbReference>
<dbReference type="GO" id="GO:0048144">
    <property type="term" value="P:fibroblast proliferation"/>
    <property type="evidence" value="ECO:0000266"/>
    <property type="project" value="RGD"/>
</dbReference>
<dbReference type="GO" id="GO:0021897">
    <property type="term" value="P:forebrain astrocyte development"/>
    <property type="evidence" value="ECO:0000250"/>
    <property type="project" value="HGNC-UCL"/>
</dbReference>
<dbReference type="GO" id="GO:0048853">
    <property type="term" value="P:forebrain morphogenesis"/>
    <property type="evidence" value="ECO:0000250"/>
    <property type="project" value="HGNC-UCL"/>
</dbReference>
<dbReference type="GO" id="GO:0061534">
    <property type="term" value="P:gamma-aminobutyric acid secretion, neurotransmission"/>
    <property type="evidence" value="ECO:0000266"/>
    <property type="project" value="RGD"/>
</dbReference>
<dbReference type="GO" id="GO:0014009">
    <property type="term" value="P:glial cell proliferation"/>
    <property type="evidence" value="ECO:0000266"/>
    <property type="project" value="RGD"/>
</dbReference>
<dbReference type="GO" id="GO:0061535">
    <property type="term" value="P:glutamate secretion, neurotransmission"/>
    <property type="evidence" value="ECO:0000266"/>
    <property type="project" value="RGD"/>
</dbReference>
<dbReference type="GO" id="GO:0048820">
    <property type="term" value="P:hair follicle maturation"/>
    <property type="evidence" value="ECO:0000266"/>
    <property type="project" value="RGD"/>
</dbReference>
<dbReference type="GO" id="GO:0007507">
    <property type="term" value="P:heart development"/>
    <property type="evidence" value="ECO:0000250"/>
    <property type="project" value="HGNC-UCL"/>
</dbReference>
<dbReference type="GO" id="GO:0071887">
    <property type="term" value="P:leukocyte apoptotic process"/>
    <property type="evidence" value="ECO:0000266"/>
    <property type="project" value="RGD"/>
</dbReference>
<dbReference type="GO" id="GO:0001889">
    <property type="term" value="P:liver development"/>
    <property type="evidence" value="ECO:0000250"/>
    <property type="project" value="HGNC-UCL"/>
</dbReference>
<dbReference type="GO" id="GO:0060291">
    <property type="term" value="P:long-term synaptic potentiation"/>
    <property type="evidence" value="ECO:0000266"/>
    <property type="project" value="RGD"/>
</dbReference>
<dbReference type="GO" id="GO:0000165">
    <property type="term" value="P:MAPK cascade"/>
    <property type="evidence" value="ECO:0000250"/>
    <property type="project" value="HGNC-UCL"/>
</dbReference>
<dbReference type="GO" id="GO:0033024">
    <property type="term" value="P:mast cell apoptotic process"/>
    <property type="evidence" value="ECO:0000266"/>
    <property type="project" value="RGD"/>
</dbReference>
<dbReference type="GO" id="GO:0070662">
    <property type="term" value="P:mast cell proliferation"/>
    <property type="evidence" value="ECO:0000266"/>
    <property type="project" value="RGD"/>
</dbReference>
<dbReference type="GO" id="GO:0001656">
    <property type="term" value="P:metanephros development"/>
    <property type="evidence" value="ECO:0000250"/>
    <property type="project" value="HGNC-UCL"/>
</dbReference>
<dbReference type="GO" id="GO:0022011">
    <property type="term" value="P:myelination in peripheral nervous system"/>
    <property type="evidence" value="ECO:0000250"/>
    <property type="project" value="HGNC-UCL"/>
</dbReference>
<dbReference type="GO" id="GO:0033028">
    <property type="term" value="P:myeloid cell apoptotic process"/>
    <property type="evidence" value="ECO:0000266"/>
    <property type="project" value="RGD"/>
</dbReference>
<dbReference type="GO" id="GO:0097529">
    <property type="term" value="P:myeloid leukocyte migration"/>
    <property type="evidence" value="ECO:0000266"/>
    <property type="project" value="RGD"/>
</dbReference>
<dbReference type="GO" id="GO:0016525">
    <property type="term" value="P:negative regulation of angiogenesis"/>
    <property type="evidence" value="ECO:0000266"/>
    <property type="project" value="RGD"/>
</dbReference>
<dbReference type="GO" id="GO:0048712">
    <property type="term" value="P:negative regulation of astrocyte differentiation"/>
    <property type="evidence" value="ECO:0000266"/>
    <property type="project" value="RGD"/>
</dbReference>
<dbReference type="GO" id="GO:0030336">
    <property type="term" value="P:negative regulation of cell migration"/>
    <property type="evidence" value="ECO:0000266"/>
    <property type="project" value="RGD"/>
</dbReference>
<dbReference type="GO" id="GO:0008285">
    <property type="term" value="P:negative regulation of cell population proliferation"/>
    <property type="evidence" value="ECO:0000266"/>
    <property type="project" value="RGD"/>
</dbReference>
<dbReference type="GO" id="GO:0001953">
    <property type="term" value="P:negative regulation of cell-matrix adhesion"/>
    <property type="evidence" value="ECO:0000266"/>
    <property type="project" value="RGD"/>
</dbReference>
<dbReference type="GO" id="GO:0001937">
    <property type="term" value="P:negative regulation of endothelial cell proliferation"/>
    <property type="evidence" value="ECO:0000266"/>
    <property type="project" value="RGD"/>
</dbReference>
<dbReference type="GO" id="GO:0048147">
    <property type="term" value="P:negative regulation of fibroblast proliferation"/>
    <property type="evidence" value="ECO:0000250"/>
    <property type="project" value="UniProtKB"/>
</dbReference>
<dbReference type="GO" id="GO:0060253">
    <property type="term" value="P:negative regulation of glial cell proliferation"/>
    <property type="evidence" value="ECO:0000266"/>
    <property type="project" value="RGD"/>
</dbReference>
<dbReference type="GO" id="GO:0002686">
    <property type="term" value="P:negative regulation of leukocyte migration"/>
    <property type="evidence" value="ECO:0000266"/>
    <property type="project" value="RGD"/>
</dbReference>
<dbReference type="GO" id="GO:0043409">
    <property type="term" value="P:negative regulation of MAPK cascade"/>
    <property type="evidence" value="ECO:0000250"/>
    <property type="project" value="HGNC-UCL"/>
</dbReference>
<dbReference type="GO" id="GO:0070667">
    <property type="term" value="P:negative regulation of mast cell proliferation"/>
    <property type="evidence" value="ECO:0000266"/>
    <property type="project" value="RGD"/>
</dbReference>
<dbReference type="GO" id="GO:0007406">
    <property type="term" value="P:negative regulation of neuroblast proliferation"/>
    <property type="evidence" value="ECO:0000250"/>
    <property type="project" value="HGNC-UCL"/>
</dbReference>
<dbReference type="GO" id="GO:0046929">
    <property type="term" value="P:negative regulation of neurotransmitter secretion"/>
    <property type="evidence" value="ECO:0000266"/>
    <property type="project" value="RGD"/>
</dbReference>
<dbReference type="GO" id="GO:0048715">
    <property type="term" value="P:negative regulation of oligodendrocyte differentiation"/>
    <property type="evidence" value="ECO:0000250"/>
    <property type="project" value="HGNC-UCL"/>
</dbReference>
<dbReference type="GO" id="GO:0045671">
    <property type="term" value="P:negative regulation of osteoclast differentiation"/>
    <property type="evidence" value="ECO:0000266"/>
    <property type="project" value="RGD"/>
</dbReference>
<dbReference type="GO" id="GO:0042308">
    <property type="term" value="P:negative regulation of protein import into nucleus"/>
    <property type="evidence" value="ECO:0000266"/>
    <property type="project" value="RGD"/>
</dbReference>
<dbReference type="GO" id="GO:0035021">
    <property type="term" value="P:negative regulation of Rac protein signal transduction"/>
    <property type="evidence" value="ECO:0000266"/>
    <property type="project" value="RGD"/>
</dbReference>
<dbReference type="GO" id="GO:0046580">
    <property type="term" value="P:negative regulation of Ras protein signal transduction"/>
    <property type="evidence" value="ECO:0000266"/>
    <property type="project" value="RGD"/>
</dbReference>
<dbReference type="GO" id="GO:1900148">
    <property type="term" value="P:negative regulation of Schwann cell migration"/>
    <property type="evidence" value="ECO:0000266"/>
    <property type="project" value="RGD"/>
</dbReference>
<dbReference type="GO" id="GO:0010626">
    <property type="term" value="P:negative regulation of Schwann cell proliferation"/>
    <property type="evidence" value="ECO:0000266"/>
    <property type="project" value="RGD"/>
</dbReference>
<dbReference type="GO" id="GO:2000647">
    <property type="term" value="P:negative regulation of stem cell proliferation"/>
    <property type="evidence" value="ECO:0000266"/>
    <property type="project" value="RGD"/>
</dbReference>
<dbReference type="GO" id="GO:1904753">
    <property type="term" value="P:negative regulation of vascular associated smooth muscle cell migration"/>
    <property type="evidence" value="ECO:0000266"/>
    <property type="project" value="RGD"/>
</dbReference>
<dbReference type="GO" id="GO:0021915">
    <property type="term" value="P:neural tube development"/>
    <property type="evidence" value="ECO:0000266"/>
    <property type="project" value="RGD"/>
</dbReference>
<dbReference type="GO" id="GO:0007405">
    <property type="term" value="P:neuroblast proliferation"/>
    <property type="evidence" value="ECO:0000266"/>
    <property type="project" value="RGD"/>
</dbReference>
<dbReference type="GO" id="GO:0051402">
    <property type="term" value="P:neuron apoptotic process"/>
    <property type="evidence" value="ECO:0000266"/>
    <property type="project" value="RGD"/>
</dbReference>
<dbReference type="GO" id="GO:0007269">
    <property type="term" value="P:neurotransmitter secretion"/>
    <property type="evidence" value="ECO:0000266"/>
    <property type="project" value="RGD"/>
</dbReference>
<dbReference type="GO" id="GO:0098597">
    <property type="term" value="P:observational learning"/>
    <property type="evidence" value="ECO:0000266"/>
    <property type="project" value="RGD"/>
</dbReference>
<dbReference type="GO" id="GO:0048709">
    <property type="term" value="P:oligodendrocyte differentiation"/>
    <property type="evidence" value="ECO:0000266"/>
    <property type="project" value="RGD"/>
</dbReference>
<dbReference type="GO" id="GO:0001649">
    <property type="term" value="P:osteoblast differentiation"/>
    <property type="evidence" value="ECO:0000250"/>
    <property type="project" value="HGNC-UCL"/>
</dbReference>
<dbReference type="GO" id="GO:0030316">
    <property type="term" value="P:osteoclast differentiation"/>
    <property type="evidence" value="ECO:0000266"/>
    <property type="project" value="RGD"/>
</dbReference>
<dbReference type="GO" id="GO:0007422">
    <property type="term" value="P:peripheral nervous system development"/>
    <property type="evidence" value="ECO:0000250"/>
    <property type="project" value="HGNC-UCL"/>
</dbReference>
<dbReference type="GO" id="GO:0043491">
    <property type="term" value="P:phosphatidylinositol 3-kinase/protein kinase B signal transduction"/>
    <property type="evidence" value="ECO:0000250"/>
    <property type="project" value="HGNC-UCL"/>
</dbReference>
<dbReference type="GO" id="GO:0043473">
    <property type="term" value="P:pigmentation"/>
    <property type="evidence" value="ECO:0000250"/>
    <property type="project" value="HGNC-UCL"/>
</dbReference>
<dbReference type="GO" id="GO:0043065">
    <property type="term" value="P:positive regulation of apoptotic process"/>
    <property type="evidence" value="ECO:0000250"/>
    <property type="project" value="HGNC-UCL"/>
</dbReference>
<dbReference type="GO" id="GO:0001938">
    <property type="term" value="P:positive regulation of endothelial cell proliferation"/>
    <property type="evidence" value="ECO:0000266"/>
    <property type="project" value="RGD"/>
</dbReference>
<dbReference type="GO" id="GO:2001241">
    <property type="term" value="P:positive regulation of extrinsic apoptotic signaling pathway in absence of ligand"/>
    <property type="evidence" value="ECO:0000266"/>
    <property type="project" value="RGD"/>
</dbReference>
<dbReference type="GO" id="GO:0043547">
    <property type="term" value="P:positive regulation of GTPase activity"/>
    <property type="evidence" value="ECO:0000250"/>
    <property type="project" value="UniProtKB"/>
</dbReference>
<dbReference type="GO" id="GO:2000108">
    <property type="term" value="P:positive regulation of leukocyte apoptotic process"/>
    <property type="evidence" value="ECO:0000266"/>
    <property type="project" value="RGD"/>
</dbReference>
<dbReference type="GO" id="GO:0033027">
    <property type="term" value="P:positive regulation of mast cell apoptotic process"/>
    <property type="evidence" value="ECO:0000266"/>
    <property type="project" value="RGD"/>
</dbReference>
<dbReference type="GO" id="GO:0033034">
    <property type="term" value="P:positive regulation of myeloid cell apoptotic process"/>
    <property type="evidence" value="ECO:0000266"/>
    <property type="project" value="RGD"/>
</dbReference>
<dbReference type="GO" id="GO:0043525">
    <property type="term" value="P:positive regulation of neuron apoptotic process"/>
    <property type="evidence" value="ECO:0000250"/>
    <property type="project" value="HGNC-UCL"/>
</dbReference>
<dbReference type="GO" id="GO:0010976">
    <property type="term" value="P:positive regulation of neuron projection development"/>
    <property type="evidence" value="ECO:0000315"/>
    <property type="project" value="RGD"/>
</dbReference>
<dbReference type="GO" id="GO:1904707">
    <property type="term" value="P:positive regulation of vascular associated smooth muscle cell proliferation"/>
    <property type="evidence" value="ECO:0000266"/>
    <property type="project" value="RGD"/>
</dbReference>
<dbReference type="GO" id="GO:0098926">
    <property type="term" value="P:postsynaptic signal transduction"/>
    <property type="evidence" value="ECO:0000314"/>
    <property type="project" value="SynGO"/>
</dbReference>
<dbReference type="GO" id="GO:0006606">
    <property type="term" value="P:protein import into nucleus"/>
    <property type="evidence" value="ECO:0000266"/>
    <property type="project" value="RGD"/>
</dbReference>
<dbReference type="GO" id="GO:0016601">
    <property type="term" value="P:Rac protein signal transduction"/>
    <property type="evidence" value="ECO:0000266"/>
    <property type="project" value="RGD"/>
</dbReference>
<dbReference type="GO" id="GO:0007265">
    <property type="term" value="P:Ras protein signal transduction"/>
    <property type="evidence" value="ECO:0000250"/>
    <property type="project" value="HGNC-UCL"/>
</dbReference>
<dbReference type="GO" id="GO:0045765">
    <property type="term" value="P:regulation of angiogenesis"/>
    <property type="evidence" value="ECO:0000250"/>
    <property type="project" value="HGNC-UCL"/>
</dbReference>
<dbReference type="GO" id="GO:0043535">
    <property type="term" value="P:regulation of blood vessel endothelial cell migration"/>
    <property type="evidence" value="ECO:0000266"/>
    <property type="project" value="RGD"/>
</dbReference>
<dbReference type="GO" id="GO:0045124">
    <property type="term" value="P:regulation of bone resorption"/>
    <property type="evidence" value="ECO:0000250"/>
    <property type="project" value="HGNC-UCL"/>
</dbReference>
<dbReference type="GO" id="GO:0042127">
    <property type="term" value="P:regulation of cell population proliferation"/>
    <property type="evidence" value="ECO:0000266"/>
    <property type="project" value="RGD"/>
</dbReference>
<dbReference type="GO" id="GO:0001952">
    <property type="term" value="P:regulation of cell-matrix adhesion"/>
    <property type="evidence" value="ECO:0000250"/>
    <property type="project" value="HGNC-UCL"/>
</dbReference>
<dbReference type="GO" id="GO:0070372">
    <property type="term" value="P:regulation of ERK1 and ERK2 cascade"/>
    <property type="evidence" value="ECO:0000266"/>
    <property type="project" value="RGD"/>
</dbReference>
<dbReference type="GO" id="GO:0010468">
    <property type="term" value="P:regulation of gene expression"/>
    <property type="evidence" value="ECO:0000266"/>
    <property type="project" value="RGD"/>
</dbReference>
<dbReference type="GO" id="GO:0045685">
    <property type="term" value="P:regulation of glial cell differentiation"/>
    <property type="evidence" value="ECO:0000250"/>
    <property type="project" value="HGNC-UCL"/>
</dbReference>
<dbReference type="GO" id="GO:0048169">
    <property type="term" value="P:regulation of long-term neuronal synaptic plasticity"/>
    <property type="evidence" value="ECO:0000266"/>
    <property type="project" value="RGD"/>
</dbReference>
<dbReference type="GO" id="GO:1900271">
    <property type="term" value="P:regulation of long-term synaptic potentiation"/>
    <property type="evidence" value="ECO:0000266"/>
    <property type="project" value="RGD"/>
</dbReference>
<dbReference type="GO" id="GO:0043408">
    <property type="term" value="P:regulation of MAPK cascade"/>
    <property type="evidence" value="ECO:0000266"/>
    <property type="project" value="RGD"/>
</dbReference>
<dbReference type="GO" id="GO:0099159">
    <property type="term" value="P:regulation of modification of postsynaptic structure"/>
    <property type="evidence" value="ECO:0000314"/>
    <property type="project" value="SynGO"/>
</dbReference>
<dbReference type="GO" id="GO:0045664">
    <property type="term" value="P:regulation of neuron differentiation"/>
    <property type="evidence" value="ECO:0000315"/>
    <property type="project" value="RGD"/>
</dbReference>
<dbReference type="GO" id="GO:0099175">
    <property type="term" value="P:regulation of postsynapse organization"/>
    <property type="evidence" value="ECO:0000266"/>
    <property type="project" value="RGD"/>
</dbReference>
<dbReference type="GO" id="GO:0032228">
    <property type="term" value="P:regulation of synaptic transmission, GABAergic"/>
    <property type="evidence" value="ECO:0000266"/>
    <property type="project" value="RGD"/>
</dbReference>
<dbReference type="GO" id="GO:0001666">
    <property type="term" value="P:response to hypoxia"/>
    <property type="evidence" value="ECO:0000250"/>
    <property type="project" value="HGNC-UCL"/>
</dbReference>
<dbReference type="GO" id="GO:0014044">
    <property type="term" value="P:Schwann cell development"/>
    <property type="evidence" value="ECO:0000250"/>
    <property type="project" value="HGNC-UCL"/>
</dbReference>
<dbReference type="GO" id="GO:0014037">
    <property type="term" value="P:Schwann cell differentiation"/>
    <property type="evidence" value="ECO:0000270"/>
    <property type="project" value="RGD"/>
</dbReference>
<dbReference type="GO" id="GO:0036135">
    <property type="term" value="P:Schwann cell migration"/>
    <property type="evidence" value="ECO:0000266"/>
    <property type="project" value="RGD"/>
</dbReference>
<dbReference type="GO" id="GO:0014010">
    <property type="term" value="P:Schwann cell proliferation"/>
    <property type="evidence" value="ECO:0000266"/>
    <property type="project" value="RGD"/>
</dbReference>
<dbReference type="GO" id="GO:0007519">
    <property type="term" value="P:skeletal muscle tissue development"/>
    <property type="evidence" value="ECO:0000266"/>
    <property type="project" value="RGD"/>
</dbReference>
<dbReference type="GO" id="GO:0048745">
    <property type="term" value="P:smooth muscle tissue development"/>
    <property type="evidence" value="ECO:0000250"/>
    <property type="project" value="HGNC-UCL"/>
</dbReference>
<dbReference type="GO" id="GO:0021510">
    <property type="term" value="P:spinal cord development"/>
    <property type="evidence" value="ECO:0000250"/>
    <property type="project" value="HGNC-UCL"/>
</dbReference>
<dbReference type="GO" id="GO:0072089">
    <property type="term" value="P:stem cell proliferation"/>
    <property type="evidence" value="ECO:0000266"/>
    <property type="project" value="RGD"/>
</dbReference>
<dbReference type="GO" id="GO:0048485">
    <property type="term" value="P:sympathetic nervous system development"/>
    <property type="evidence" value="ECO:0000250"/>
    <property type="project" value="HGNC-UCL"/>
</dbReference>
<dbReference type="GO" id="GO:1904738">
    <property type="term" value="P:vascular associated smooth muscle cell migration"/>
    <property type="evidence" value="ECO:0000266"/>
    <property type="project" value="RGD"/>
</dbReference>
<dbReference type="GO" id="GO:1990874">
    <property type="term" value="P:vascular associated smooth muscle cell proliferation"/>
    <property type="evidence" value="ECO:0000266"/>
    <property type="project" value="RGD"/>
</dbReference>
<dbReference type="GO" id="GO:0008542">
    <property type="term" value="P:visual learning"/>
    <property type="evidence" value="ECO:0000250"/>
    <property type="project" value="HGNC-UCL"/>
</dbReference>
<dbReference type="GO" id="GO:0042060">
    <property type="term" value="P:wound healing"/>
    <property type="evidence" value="ECO:0000250"/>
    <property type="project" value="HGNC-UCL"/>
</dbReference>
<dbReference type="CDD" id="cd13313">
    <property type="entry name" value="PH_NF1"/>
    <property type="match status" value="1"/>
</dbReference>
<dbReference type="CDD" id="cd05130">
    <property type="entry name" value="RasGAP_Neurofibromin"/>
    <property type="match status" value="1"/>
</dbReference>
<dbReference type="CDD" id="cd00170">
    <property type="entry name" value="SEC14"/>
    <property type="match status" value="1"/>
</dbReference>
<dbReference type="FunFam" id="2.30.29.30:FF:000070">
    <property type="entry name" value="Neurofibromin 1"/>
    <property type="match status" value="1"/>
</dbReference>
<dbReference type="FunFam" id="3.40.525.10:FF:000004">
    <property type="entry name" value="Neurofibromin 1"/>
    <property type="match status" value="1"/>
</dbReference>
<dbReference type="FunFam" id="1.10.506.10:FF:000015">
    <property type="entry name" value="Neurofibromin isoform 1"/>
    <property type="match status" value="1"/>
</dbReference>
<dbReference type="FunFam" id="1.10.506.10:FF:000023">
    <property type="entry name" value="Neurofibromin isoform 1"/>
    <property type="match status" value="1"/>
</dbReference>
<dbReference type="Gene3D" id="3.40.525.10">
    <property type="entry name" value="CRAL-TRIO lipid binding domain"/>
    <property type="match status" value="1"/>
</dbReference>
<dbReference type="Gene3D" id="1.10.506.10">
    <property type="entry name" value="GTPase Activation - p120gap, domain 1"/>
    <property type="match status" value="2"/>
</dbReference>
<dbReference type="Gene3D" id="2.30.29.30">
    <property type="entry name" value="Pleckstrin-homology domain (PH domain)/Phosphotyrosine-binding domain (PTB)"/>
    <property type="match status" value="1"/>
</dbReference>
<dbReference type="InterPro" id="IPR016024">
    <property type="entry name" value="ARM-type_fold"/>
</dbReference>
<dbReference type="InterPro" id="IPR001251">
    <property type="entry name" value="CRAL-TRIO_dom"/>
</dbReference>
<dbReference type="InterPro" id="IPR036865">
    <property type="entry name" value="CRAL-TRIO_dom_sf"/>
</dbReference>
<dbReference type="InterPro" id="IPR011993">
    <property type="entry name" value="PH-like_dom_sf"/>
</dbReference>
<dbReference type="InterPro" id="IPR054071">
    <property type="entry name" value="PH_NF1"/>
</dbReference>
<dbReference type="InterPro" id="IPR039360">
    <property type="entry name" value="Ras_GTPase"/>
</dbReference>
<dbReference type="InterPro" id="IPR023152">
    <property type="entry name" value="RasGAP_CS"/>
</dbReference>
<dbReference type="InterPro" id="IPR001936">
    <property type="entry name" value="RasGAP_dom"/>
</dbReference>
<dbReference type="InterPro" id="IPR008936">
    <property type="entry name" value="Rho_GTPase_activation_prot"/>
</dbReference>
<dbReference type="PANTHER" id="PTHR10194:SF142">
    <property type="entry name" value="NEUROFIBROMIN"/>
    <property type="match status" value="1"/>
</dbReference>
<dbReference type="PANTHER" id="PTHR10194">
    <property type="entry name" value="RAS GTPASE-ACTIVATING PROTEINS"/>
    <property type="match status" value="1"/>
</dbReference>
<dbReference type="Pfam" id="PF13716">
    <property type="entry name" value="CRAL_TRIO_2"/>
    <property type="match status" value="1"/>
</dbReference>
<dbReference type="Pfam" id="PF21877">
    <property type="entry name" value="PH_NF1"/>
    <property type="match status" value="1"/>
</dbReference>
<dbReference type="Pfam" id="PF00616">
    <property type="entry name" value="RasGAP"/>
    <property type="match status" value="1"/>
</dbReference>
<dbReference type="SMART" id="SM00323">
    <property type="entry name" value="RasGAP"/>
    <property type="match status" value="1"/>
</dbReference>
<dbReference type="SMART" id="SM00516">
    <property type="entry name" value="SEC14"/>
    <property type="match status" value="1"/>
</dbReference>
<dbReference type="SUPFAM" id="SSF48371">
    <property type="entry name" value="ARM repeat"/>
    <property type="match status" value="1"/>
</dbReference>
<dbReference type="SUPFAM" id="SSF48350">
    <property type="entry name" value="GTPase activation domain, GAP"/>
    <property type="match status" value="1"/>
</dbReference>
<dbReference type="PROSITE" id="PS50191">
    <property type="entry name" value="CRAL_TRIO"/>
    <property type="match status" value="1"/>
</dbReference>
<dbReference type="PROSITE" id="PS00509">
    <property type="entry name" value="RAS_GTPASE_ACTIV_1"/>
    <property type="match status" value="1"/>
</dbReference>
<dbReference type="PROSITE" id="PS50018">
    <property type="entry name" value="RAS_GTPASE_ACTIV_2"/>
    <property type="match status" value="1"/>
</dbReference>
<sequence length="2820" mass="317083">MAAHRPVEWVQAVVSRFDEQLPIKTGQQNTHTKVSTEHNKECLINISKYKFSLVISGLTTILKNVNNMRIFGEAAEKNLYLSQLIILDTLEKCLAGQPKDTMRLDETMLVKQLLPEICHFLHTCREGNQHAAELRNSASGVLFSLSCNNFNAVFSRISTRLQELTVCSEDNVDVHDIELLQYINVDCAKLKRLLKETAFKFKALKKVAQLAVINSLEKAFWNWVENYPDEFTKLYQIPQTDMAECAGKLFDLVDGFAESTKRKAAVWPLQIILLILCPEIIQDISRDVVDENNTNKKLFLDSLRKALAGHGGSRQLTESAAIACVKLCKASTYINWEDNSVIFLLVQSMVVDLKNLLFNPSKPFSRGSQPADVDLMIDCLVSCFRISPHNNQHFKICLAQNSPSTFHYVLVNSLHRIITNSAWDWWPKIDAVYCHSVELRNMFGETLHKAVQGCGAHPALRMAPSLTFKEKVTSLKFKEKPTDLEARSYKYLLLSMVKLIHADPKLLLCNPRKQGPETQGSTAELITGLVQLVPQSHMPEVAQEAMEALLVLHQLDSIDLWNPDAPVETFWEISSQMLFYICKKLTSHQMLSSTEILKWLREILICRNKFLLKNKQADRSSCHSLYLYGVGCDLPASGNVTQMSVDHEESLRTCAPGASLRKGRGNSSMDSTAGCSGTPPICRQAQTKLEVALYMFLWSPDTEVVLVAMSCFRHLCEEADIRCGVDEVSVHNFLPNYNTFMEFASVSNMLSTGRAALQKRVMALLRRIEHPTAGNTEAWEDTHAKWEQATKLILNYPKAKMEDGQAAESLHKTIVKRRMSHVSGGGSIDLSDTDSLQEWINMTGFLCALGGVCLQQRSSSGLATYSPPMGPVSERKGSMISVMSSEGNVDSPVSRFMDRLLSLMVCNHEKVGLQIRTNVKDLVGLELSPALYPMLFNKLKSAISKFFDSQGQVLLTDSNTQFVEQTIAIMKNLLDNHTEGSSEHLGQASIETMMLNLVRYVRVLGNMVHAIQIKTKLCQLVEVMMARRDDLSFCQEMKFRNKMVEYLTDWVMGTSNQAADDDVKCLTRDLDQASMEAVVSLLAGLPLQPEEGDGVELMEAKSQLFLKYFTLFMNLLNDCSEVEDENAQTGGRKRGMSRRLASLRHCTVLAMSNLLNANVDSGLMHSIGLGYHKDLQTRATFMEVLTKILQQGTEFDTLAETVLADRFERLVELVTMMGDQGELPIAMALANVVPCSQWDELARVLVTLFDSRHLLYQLLWNMFSKEVELADSMQTLFRGNSLASKIMTFCFKVYGATYLQKLLDPLLRIIITSSDWQHVSFEVDPTRLEPSESLEENQRNLLQMTEKFFHAIISSSSEFPSQLRSVCHCLYQVVSQRFPQNSIGAVGSAMFLRFINPAIVSPYEAGILDKKPPPRIERGLKLMSKVLQSIANHVLFTKEEHMRPFNDFVKSNFDLARRFFLDIASDCPTSDAVNHSLSFISDGNVLALHRLLWNNQEKIGQYLSSNRDHKAVGRRPFDKMATLLAYLGPPEHKPVADTHWSSLNLTSSKFEEFMTRHQVHEKEEFKALKTLSIFYQAGTSKAGNPIFYYVARRFKTGQINGDLLIYHVLLTLKPYYAKPYEIVVDLTHTGPSNRFKTDFLSKWFVVFPGFAYDNVSAVYIYNCNSWVREYTKYHERLLTGLKGSKRLIFIDCPGKLAEHIEHEQQKLPAATLALEEDLKVFHNALKLAHKDTKVSIKVGSTAVQVTSAERTKVLGQSVFLNDIYYASEIEEICLVDENQFTLTIANQGTPLTFMHQECEAIVQSIIHIRTRWELSQPDSIPQHTKIRPKDVPGTLLNIALLNLGSSDPSLRSAAYNLLCALTCTFNLKIEGQLLETSGLCIPANNTLFIVSISKTLAANEPHLTLEFLEECISGFSKSSIELKHLCLEYMTPWLSNLVRFCKHNDDAKRQRVTAILDKLITMTINEKQMYPSIQAKIWGSLGQITDLLDVVLDSFIKTSATGGLGSIKAEVMADTAVALASGNVKLVSSKVIGRMCKIIDKTCLSPTPTLEQHLMWDDIAILARYMLMLSFNNSLDVAAHLPYLFHVVTFLVATGPLSLRASTHGLVINIIHSLCTCSQLHFSEETKQVLRLSLTEFSLPKFYLLFGISKVKSAAVIAFRSSYRDRSFSPGSYERETFALTSLETVTEALLEIMEACMRDIPTCKWLDQWTELAQRFAFQYNPSLQPRALVVFGCISKRVSHGQIKQIIRILSKALESCLKGPDTYNSQVLIEATVIALTKLQPLLNKDSPLHKALFWVAVAVLQLDEVNLYSAGTALLEQNLHTLDSLRIFNDKSPEEVFMAIRNPLEWHCKQMDHFVGLNFNSNFNFALVGHLLKGYRHPSPAIVARTVRILHTLLTLVNKHRNCDKFEVNTQSVAYLAALLTVSEEVRSRCSLKHRKSLLLTDISMENVPMDTYPIHHGDPSSRTLKETQPWSSPRGSEGYLAATYPAVGQTSPRARKSMSLDMGQPSQANTKKLLGTRKSFDHLISDTKAPKRQEMESGITTPPKMRRVAETDYEMETQRISSSQQHPHLRKVSVSESNVLLDEEVLTDPKIQALLLTVLATLVKYTTDEFDQRILYEYLAEASVVFPKVFPLVHNLLDSKINTLLSLCQDPNLLNPIHGIVQSVVYHEESPPQYQTSYLQSFGFNGLWRFAGPFSKQTQIPDYAELIVKFLDALIDTYLPGIDEETSEESLLTPTSPYPPALQSQLSITANLNLSNSMTSLATSQHSPGIDKENVELSPTTGHCNSGRTRHGSASQVQKQRSAGSFKRNSIKKIV</sequence>
<proteinExistence type="evidence at protein level"/>
<gene>
    <name type="primary">Nf1</name>
</gene>
<name>NF1_RAT</name>
<accession>P97526</accession>
<keyword id="KW-0007">Acetylation</keyword>
<keyword id="KW-1003">Cell membrane</keyword>
<keyword id="KW-0903">Direct protein sequencing</keyword>
<keyword id="KW-0343">GTPase activation</keyword>
<keyword id="KW-0446">Lipid-binding</keyword>
<keyword id="KW-0472">Membrane</keyword>
<keyword id="KW-0539">Nucleus</keyword>
<keyword id="KW-0597">Phosphoprotein</keyword>
<keyword id="KW-1185">Reference proteome</keyword>
<keyword id="KW-0832">Ubl conjugation</keyword>
<reference key="1">
    <citation type="journal article" date="1992" name="Int. J. Oncol.">
        <title>Differential splicing of the neurofibromatosis type 1 (NF1) gene in rats: homologous splice variants in human are expressed in rat cells.</title>
        <authorList>
            <person name="Kyritsis A.P."/>
            <person name="Lee P.S."/>
            <person name="Mochizuki H."/>
            <person name="Nishi T."/>
            <person name="Levin V.A."/>
            <person name="Saya H."/>
        </authorList>
    </citation>
    <scope>NUCLEOTIDE SEQUENCE [MRNA]</scope>
    <source>
        <strain>Wistar</strain>
        <tissue>Brain</tissue>
    </source>
</reference>
<reference key="2">
    <citation type="journal article" date="1996" name="J. Biochem.">
        <title>Differential tissue-specific expression of neurofibromin isoform mRNAs in rat.</title>
        <authorList>
            <person name="Suzuki H."/>
            <person name="Takahashi K."/>
            <person name="Yasumoto K."/>
            <person name="Fuse N."/>
            <person name="Shibahara S."/>
        </authorList>
    </citation>
    <scope>NUCLEOTIDE SEQUENCE [MRNA]</scope>
    <source>
        <strain>Wistar</strain>
        <tissue>Brain</tissue>
    </source>
</reference>
<reference key="3">
    <citation type="submission" date="2007-03" db="UniProtKB">
        <authorList>
            <person name="Bienvenut W.V."/>
            <person name="von Kriegsheim A.F."/>
            <person name="Kolch W."/>
        </authorList>
    </citation>
    <scope>PROTEIN SEQUENCE OF 2-24; 51-63; 78-92; 104-111; 207-218; 249-262; 298-305; 355-366; 462-469; 491-498; 767-785; 792-798; 972-999; 1003-1014; 1179-1209; 1244-1252; 1266-1278; 1293-1327; 1340-1364; 1394-1410; 1426-1438; 1451-1457; 1491-1507; 1550-1556; 1570-1592; 1619-1634; 1707-1726; 1738-1750; 1810-1825; 1830-1851; 1952-1976; 1998-2025; 2132-2150; 2153-2160; 2167-2175; 2206-2228; 2262-2281; 2331-2345; 2468-2498; 2502-2516; 2596-2618 AND 2702-2714</scope>
    <scope>CLEAVAGE OF INITIATOR METHIONINE</scope>
    <scope>ACETYLATION AT ALA-2</scope>
    <scope>IDENTIFICATION BY MASS SPECTROMETRY</scope>
    <source>
        <tissue>Pheochromocytoma</tissue>
    </source>
</reference>
<reference key="4">
    <citation type="journal article" date="2012" name="Nat. Commun.">
        <title>Quantitative maps of protein phosphorylation sites across 14 different rat organs and tissues.</title>
        <authorList>
            <person name="Lundby A."/>
            <person name="Secher A."/>
            <person name="Lage K."/>
            <person name="Nordsborg N.B."/>
            <person name="Dmytriyev A."/>
            <person name="Lundby C."/>
            <person name="Olsen J.V."/>
        </authorList>
    </citation>
    <scope>PHOSPHORYLATION [LARGE SCALE ANALYSIS] AT SER-866; SER-2169; SER-2504 AND SER-2524</scope>
    <scope>IDENTIFICATION BY MASS SPECTROMETRY [LARGE SCALE ANALYSIS]</scope>
</reference>
<organism>
    <name type="scientific">Rattus norvegicus</name>
    <name type="common">Rat</name>
    <dbReference type="NCBI Taxonomy" id="10116"/>
    <lineage>
        <taxon>Eukaryota</taxon>
        <taxon>Metazoa</taxon>
        <taxon>Chordata</taxon>
        <taxon>Craniata</taxon>
        <taxon>Vertebrata</taxon>
        <taxon>Euteleostomi</taxon>
        <taxon>Mammalia</taxon>
        <taxon>Eutheria</taxon>
        <taxon>Euarchontoglires</taxon>
        <taxon>Glires</taxon>
        <taxon>Rodentia</taxon>
        <taxon>Myomorpha</taxon>
        <taxon>Muroidea</taxon>
        <taxon>Muridae</taxon>
        <taxon>Murinae</taxon>
        <taxon>Rattus</taxon>
    </lineage>
</organism>
<protein>
    <recommendedName>
        <fullName>Neurofibromin</fullName>
    </recommendedName>
    <alternativeName>
        <fullName>Neurofibromatosis-related protein NF-1</fullName>
    </alternativeName>
</protein>